<sequence>MNDYLIKAINASKDLRLLTINGKDLVAEAQKRHDTWSASSAVLGRSLLGTLLLAGAELKGDQELTLRLLGDGPVGAAVVTAKSDLTVKGYVQNNHVALPAREDGHIDVKKAVGKGWLQVTKDLGLKQPYTGEVPIVSGEIAEDLTYYLAKSEQIPSAVGLSVFVNPNDTIGAAGGFLLQALPGASEELLQETEDRIKALPQLSSAFLDGMTPEDLAKKILGDDSKILEKDEVSYHCDCSKEKYAGMLETLKGSQLKEMIDEDHGAELVCNFCGNKYNFTEAELQAILDKKLGK</sequence>
<feature type="chain" id="PRO_1000015548" description="33 kDa chaperonin">
    <location>
        <begin position="1"/>
        <end position="293"/>
    </location>
</feature>
<feature type="disulfide bond" description="Redox-active" evidence="1">
    <location>
        <begin position="236"/>
        <end position="238"/>
    </location>
</feature>
<feature type="disulfide bond" description="Redox-active" evidence="1">
    <location>
        <begin position="269"/>
        <end position="272"/>
    </location>
</feature>
<gene>
    <name evidence="1" type="primary">hslO</name>
    <name type="ordered locus">LBUL_0324</name>
</gene>
<evidence type="ECO:0000255" key="1">
    <source>
        <dbReference type="HAMAP-Rule" id="MF_00117"/>
    </source>
</evidence>
<reference key="1">
    <citation type="journal article" date="2006" name="Proc. Natl. Acad. Sci. U.S.A.">
        <title>Comparative genomics of the lactic acid bacteria.</title>
        <authorList>
            <person name="Makarova K.S."/>
            <person name="Slesarev A."/>
            <person name="Wolf Y.I."/>
            <person name="Sorokin A."/>
            <person name="Mirkin B."/>
            <person name="Koonin E.V."/>
            <person name="Pavlov A."/>
            <person name="Pavlova N."/>
            <person name="Karamychev V."/>
            <person name="Polouchine N."/>
            <person name="Shakhova V."/>
            <person name="Grigoriev I."/>
            <person name="Lou Y."/>
            <person name="Rohksar D."/>
            <person name="Lucas S."/>
            <person name="Huang K."/>
            <person name="Goodstein D.M."/>
            <person name="Hawkins T."/>
            <person name="Plengvidhya V."/>
            <person name="Welker D."/>
            <person name="Hughes J."/>
            <person name="Goh Y."/>
            <person name="Benson A."/>
            <person name="Baldwin K."/>
            <person name="Lee J.-H."/>
            <person name="Diaz-Muniz I."/>
            <person name="Dosti B."/>
            <person name="Smeianov V."/>
            <person name="Wechter W."/>
            <person name="Barabote R."/>
            <person name="Lorca G."/>
            <person name="Altermann E."/>
            <person name="Barrangou R."/>
            <person name="Ganesan B."/>
            <person name="Xie Y."/>
            <person name="Rawsthorne H."/>
            <person name="Tamir D."/>
            <person name="Parker C."/>
            <person name="Breidt F."/>
            <person name="Broadbent J.R."/>
            <person name="Hutkins R."/>
            <person name="O'Sullivan D."/>
            <person name="Steele J."/>
            <person name="Unlu G."/>
            <person name="Saier M.H. Jr."/>
            <person name="Klaenhammer T."/>
            <person name="Richardson P."/>
            <person name="Kozyavkin S."/>
            <person name="Weimer B.C."/>
            <person name="Mills D.A."/>
        </authorList>
    </citation>
    <scope>NUCLEOTIDE SEQUENCE [LARGE SCALE GENOMIC DNA]</scope>
    <source>
        <strain>ATCC BAA-365 / Lb-18</strain>
    </source>
</reference>
<dbReference type="EMBL" id="CP000412">
    <property type="protein sequence ID" value="ABJ57986.1"/>
    <property type="molecule type" value="Genomic_DNA"/>
</dbReference>
<dbReference type="RefSeq" id="WP_011678017.1">
    <property type="nucleotide sequence ID" value="NC_008529.1"/>
</dbReference>
<dbReference type="SMR" id="Q04C36"/>
<dbReference type="KEGG" id="lbu:LBUL_0324"/>
<dbReference type="HOGENOM" id="CLU_054493_1_0_9"/>
<dbReference type="BioCyc" id="LDEL321956:LBUL_RS01520-MONOMER"/>
<dbReference type="GO" id="GO:0005737">
    <property type="term" value="C:cytoplasm"/>
    <property type="evidence" value="ECO:0007669"/>
    <property type="project" value="UniProtKB-SubCell"/>
</dbReference>
<dbReference type="GO" id="GO:0044183">
    <property type="term" value="F:protein folding chaperone"/>
    <property type="evidence" value="ECO:0007669"/>
    <property type="project" value="TreeGrafter"/>
</dbReference>
<dbReference type="GO" id="GO:0051082">
    <property type="term" value="F:unfolded protein binding"/>
    <property type="evidence" value="ECO:0007669"/>
    <property type="project" value="UniProtKB-UniRule"/>
</dbReference>
<dbReference type="GO" id="GO:0042026">
    <property type="term" value="P:protein refolding"/>
    <property type="evidence" value="ECO:0007669"/>
    <property type="project" value="TreeGrafter"/>
</dbReference>
<dbReference type="CDD" id="cd00498">
    <property type="entry name" value="Hsp33"/>
    <property type="match status" value="1"/>
</dbReference>
<dbReference type="Gene3D" id="3.55.30.10">
    <property type="entry name" value="Hsp33 domain"/>
    <property type="match status" value="1"/>
</dbReference>
<dbReference type="Gene3D" id="3.90.1280.10">
    <property type="entry name" value="HSP33 redox switch-like"/>
    <property type="match status" value="1"/>
</dbReference>
<dbReference type="HAMAP" id="MF_00117">
    <property type="entry name" value="HslO"/>
    <property type="match status" value="1"/>
</dbReference>
<dbReference type="InterPro" id="IPR000397">
    <property type="entry name" value="Heat_shock_Hsp33"/>
</dbReference>
<dbReference type="InterPro" id="IPR016154">
    <property type="entry name" value="Heat_shock_Hsp33_C"/>
</dbReference>
<dbReference type="InterPro" id="IPR016153">
    <property type="entry name" value="Heat_shock_Hsp33_N"/>
</dbReference>
<dbReference type="NCBIfam" id="NF001033">
    <property type="entry name" value="PRK00114.1"/>
    <property type="match status" value="1"/>
</dbReference>
<dbReference type="PANTHER" id="PTHR30111">
    <property type="entry name" value="33 KDA CHAPERONIN"/>
    <property type="match status" value="1"/>
</dbReference>
<dbReference type="PANTHER" id="PTHR30111:SF1">
    <property type="entry name" value="33 KDA CHAPERONIN"/>
    <property type="match status" value="1"/>
</dbReference>
<dbReference type="Pfam" id="PF01430">
    <property type="entry name" value="HSP33"/>
    <property type="match status" value="1"/>
</dbReference>
<dbReference type="PIRSF" id="PIRSF005261">
    <property type="entry name" value="Heat_shock_Hsp33"/>
    <property type="match status" value="1"/>
</dbReference>
<dbReference type="SUPFAM" id="SSF64397">
    <property type="entry name" value="Hsp33 domain"/>
    <property type="match status" value="1"/>
</dbReference>
<dbReference type="SUPFAM" id="SSF118352">
    <property type="entry name" value="HSP33 redox switch-like"/>
    <property type="match status" value="1"/>
</dbReference>
<comment type="function">
    <text evidence="1">Redox regulated molecular chaperone. Protects both thermally unfolding and oxidatively damaged proteins from irreversible aggregation. Plays an important role in the bacterial defense system toward oxidative stress.</text>
</comment>
<comment type="subcellular location">
    <subcellularLocation>
        <location evidence="1">Cytoplasm</location>
    </subcellularLocation>
</comment>
<comment type="PTM">
    <text evidence="1">Under oxidizing conditions two disulfide bonds are formed involving the reactive cysteines. Under reducing conditions zinc is bound to the reactive cysteines and the protein is inactive.</text>
</comment>
<comment type="similarity">
    <text evidence="1">Belongs to the HSP33 family.</text>
</comment>
<name>HSLO_LACDB</name>
<keyword id="KW-0143">Chaperone</keyword>
<keyword id="KW-0963">Cytoplasm</keyword>
<keyword id="KW-1015">Disulfide bond</keyword>
<keyword id="KW-0676">Redox-active center</keyword>
<keyword id="KW-0862">Zinc</keyword>
<proteinExistence type="inferred from homology"/>
<accession>Q04C36</accession>
<organism>
    <name type="scientific">Lactobacillus delbrueckii subsp. bulgaricus (strain ATCC BAA-365 / Lb-18)</name>
    <dbReference type="NCBI Taxonomy" id="321956"/>
    <lineage>
        <taxon>Bacteria</taxon>
        <taxon>Bacillati</taxon>
        <taxon>Bacillota</taxon>
        <taxon>Bacilli</taxon>
        <taxon>Lactobacillales</taxon>
        <taxon>Lactobacillaceae</taxon>
        <taxon>Lactobacillus</taxon>
    </lineage>
</organism>
<protein>
    <recommendedName>
        <fullName evidence="1">33 kDa chaperonin</fullName>
    </recommendedName>
    <alternativeName>
        <fullName evidence="1">Heat shock protein 33 homolog</fullName>
        <shortName evidence="1">HSP33</shortName>
    </alternativeName>
</protein>